<feature type="chain" id="PRO_0000116674" description="Hypoxanthine-guanine phosphoribosyltransferase">
    <location>
        <begin position="1"/>
        <end position="206"/>
    </location>
</feature>
<feature type="active site" description="Proton acceptor" evidence="1">
    <location>
        <position position="114"/>
    </location>
</feature>
<feature type="binding site" evidence="1">
    <location>
        <begin position="110"/>
        <end position="118"/>
    </location>
    <ligand>
        <name>GMP</name>
        <dbReference type="ChEBI" id="CHEBI:58115"/>
    </ligand>
</feature>
<feature type="binding site" evidence="1">
    <location>
        <position position="154"/>
    </location>
    <ligand>
        <name>GMP</name>
        <dbReference type="ChEBI" id="CHEBI:58115"/>
    </ligand>
</feature>
<feature type="binding site" evidence="1">
    <location>
        <begin position="181"/>
        <end position="187"/>
    </location>
    <ligand>
        <name>GMP</name>
        <dbReference type="ChEBI" id="CHEBI:58115"/>
    </ligand>
</feature>
<dbReference type="EC" id="2.4.2.8" evidence="2"/>
<dbReference type="EMBL" id="CU329670">
    <property type="protein sequence ID" value="CAB11165.1"/>
    <property type="molecule type" value="Genomic_DNA"/>
</dbReference>
<dbReference type="PIR" id="T38251">
    <property type="entry name" value="T38251"/>
</dbReference>
<dbReference type="RefSeq" id="NP_593644.1">
    <property type="nucleotide sequence ID" value="NM_001019075.2"/>
</dbReference>
<dbReference type="SMR" id="O13917"/>
<dbReference type="BioGRID" id="278455">
    <property type="interactions" value="5"/>
</dbReference>
<dbReference type="FunCoup" id="O13917">
    <property type="interactions" value="33"/>
</dbReference>
<dbReference type="STRING" id="284812.O13917"/>
<dbReference type="iPTMnet" id="O13917"/>
<dbReference type="PaxDb" id="4896-SPAC23C11.13c.1"/>
<dbReference type="EnsemblFungi" id="SPAC23C11.13c.1">
    <property type="protein sequence ID" value="SPAC23C11.13c.1:pep"/>
    <property type="gene ID" value="SPAC23C11.13c"/>
</dbReference>
<dbReference type="GeneID" id="2541970"/>
<dbReference type="KEGG" id="spo:2541970"/>
<dbReference type="PomBase" id="SPAC23C11.13c">
    <property type="gene designation" value="hpt1"/>
</dbReference>
<dbReference type="VEuPathDB" id="FungiDB:SPAC23C11.13c"/>
<dbReference type="eggNOG" id="ENOG502QRN9">
    <property type="taxonomic scope" value="Eukaryota"/>
</dbReference>
<dbReference type="HOGENOM" id="CLU_092544_0_0_1"/>
<dbReference type="InParanoid" id="O13917"/>
<dbReference type="OMA" id="TYNDVHN"/>
<dbReference type="PhylomeDB" id="O13917"/>
<dbReference type="PRO" id="PR:O13917"/>
<dbReference type="Proteomes" id="UP000002485">
    <property type="component" value="Chromosome I"/>
</dbReference>
<dbReference type="GO" id="GO:0005737">
    <property type="term" value="C:cytoplasm"/>
    <property type="evidence" value="ECO:0000266"/>
    <property type="project" value="PomBase"/>
</dbReference>
<dbReference type="GO" id="GO:0005783">
    <property type="term" value="C:endoplasmic reticulum"/>
    <property type="evidence" value="ECO:0007669"/>
    <property type="project" value="UniProtKB-SubCell"/>
</dbReference>
<dbReference type="GO" id="GO:0005634">
    <property type="term" value="C:nucleus"/>
    <property type="evidence" value="ECO:0000266"/>
    <property type="project" value="PomBase"/>
</dbReference>
<dbReference type="GO" id="GO:0052657">
    <property type="term" value="F:guanine phosphoribosyltransferase activity"/>
    <property type="evidence" value="ECO:0000314"/>
    <property type="project" value="PomBase"/>
</dbReference>
<dbReference type="GO" id="GO:0004422">
    <property type="term" value="F:hypoxanthine phosphoribosyltransferase activity"/>
    <property type="evidence" value="ECO:0000314"/>
    <property type="project" value="PomBase"/>
</dbReference>
<dbReference type="GO" id="GO:0046872">
    <property type="term" value="F:metal ion binding"/>
    <property type="evidence" value="ECO:0007669"/>
    <property type="project" value="UniProtKB-KW"/>
</dbReference>
<dbReference type="GO" id="GO:0000166">
    <property type="term" value="F:nucleotide binding"/>
    <property type="evidence" value="ECO:0007669"/>
    <property type="project" value="UniProtKB-KW"/>
</dbReference>
<dbReference type="GO" id="GO:0016763">
    <property type="term" value="F:pentosyltransferase activity"/>
    <property type="evidence" value="ECO:0000315"/>
    <property type="project" value="PomBase"/>
</dbReference>
<dbReference type="GO" id="GO:0000310">
    <property type="term" value="F:xanthine phosphoribosyltransferase activity"/>
    <property type="evidence" value="ECO:0000314"/>
    <property type="project" value="PomBase"/>
</dbReference>
<dbReference type="GO" id="GO:0032263">
    <property type="term" value="P:GMP salvage"/>
    <property type="evidence" value="ECO:0000314"/>
    <property type="project" value="PomBase"/>
</dbReference>
<dbReference type="GO" id="GO:0046100">
    <property type="term" value="P:hypoxanthine metabolic process"/>
    <property type="evidence" value="ECO:0000318"/>
    <property type="project" value="GO_Central"/>
</dbReference>
<dbReference type="GO" id="GO:0032264">
    <property type="term" value="P:IMP salvage"/>
    <property type="evidence" value="ECO:0000269"/>
    <property type="project" value="PomBase"/>
</dbReference>
<dbReference type="GO" id="GO:0006166">
    <property type="term" value="P:purine ribonucleoside salvage"/>
    <property type="evidence" value="ECO:0007669"/>
    <property type="project" value="UniProtKB-KW"/>
</dbReference>
<dbReference type="GO" id="GO:0032265">
    <property type="term" value="P:XMP salvage"/>
    <property type="evidence" value="ECO:0000318"/>
    <property type="project" value="GO_Central"/>
</dbReference>
<dbReference type="CDD" id="cd06223">
    <property type="entry name" value="PRTases_typeI"/>
    <property type="match status" value="1"/>
</dbReference>
<dbReference type="FunFam" id="3.40.50.2020:FF:000033">
    <property type="entry name" value="Xanthine phosphoribosyltransferase 1"/>
    <property type="match status" value="1"/>
</dbReference>
<dbReference type="Gene3D" id="3.40.50.2020">
    <property type="match status" value="1"/>
</dbReference>
<dbReference type="InterPro" id="IPR000836">
    <property type="entry name" value="PRibTrfase_dom"/>
</dbReference>
<dbReference type="InterPro" id="IPR029057">
    <property type="entry name" value="PRTase-like"/>
</dbReference>
<dbReference type="PANTHER" id="PTHR43363">
    <property type="entry name" value="HYPOXANTHINE PHOSPHORIBOSYLTRANSFERASE"/>
    <property type="match status" value="1"/>
</dbReference>
<dbReference type="PANTHER" id="PTHR43363:SF1">
    <property type="entry name" value="HYPOXANTHINE-GUANINE PHOSPHORIBOSYLTRANSFERASE"/>
    <property type="match status" value="1"/>
</dbReference>
<dbReference type="Pfam" id="PF00156">
    <property type="entry name" value="Pribosyltran"/>
    <property type="match status" value="1"/>
</dbReference>
<dbReference type="SUPFAM" id="SSF53271">
    <property type="entry name" value="PRTase-like"/>
    <property type="match status" value="1"/>
</dbReference>
<organism>
    <name type="scientific">Schizosaccharomyces pombe (strain 972 / ATCC 24843)</name>
    <name type="common">Fission yeast</name>
    <dbReference type="NCBI Taxonomy" id="284812"/>
    <lineage>
        <taxon>Eukaryota</taxon>
        <taxon>Fungi</taxon>
        <taxon>Dikarya</taxon>
        <taxon>Ascomycota</taxon>
        <taxon>Taphrinomycotina</taxon>
        <taxon>Schizosaccharomycetes</taxon>
        <taxon>Schizosaccharomycetales</taxon>
        <taxon>Schizosaccharomycetaceae</taxon>
        <taxon>Schizosaccharomyces</taxon>
    </lineage>
</organism>
<reference key="1">
    <citation type="journal article" date="2002" name="Nature">
        <title>The genome sequence of Schizosaccharomyces pombe.</title>
        <authorList>
            <person name="Wood V."/>
            <person name="Gwilliam R."/>
            <person name="Rajandream M.A."/>
            <person name="Lyne M.H."/>
            <person name="Lyne R."/>
            <person name="Stewart A."/>
            <person name="Sgouros J.G."/>
            <person name="Peat N."/>
            <person name="Hayles J."/>
            <person name="Baker S.G."/>
            <person name="Basham D."/>
            <person name="Bowman S."/>
            <person name="Brooks K."/>
            <person name="Brown D."/>
            <person name="Brown S."/>
            <person name="Chillingworth T."/>
            <person name="Churcher C.M."/>
            <person name="Collins M."/>
            <person name="Connor R."/>
            <person name="Cronin A."/>
            <person name="Davis P."/>
            <person name="Feltwell T."/>
            <person name="Fraser A."/>
            <person name="Gentles S."/>
            <person name="Goble A."/>
            <person name="Hamlin N."/>
            <person name="Harris D.E."/>
            <person name="Hidalgo J."/>
            <person name="Hodgson G."/>
            <person name="Holroyd S."/>
            <person name="Hornsby T."/>
            <person name="Howarth S."/>
            <person name="Huckle E.J."/>
            <person name="Hunt S."/>
            <person name="Jagels K."/>
            <person name="James K.D."/>
            <person name="Jones L."/>
            <person name="Jones M."/>
            <person name="Leather S."/>
            <person name="McDonald S."/>
            <person name="McLean J."/>
            <person name="Mooney P."/>
            <person name="Moule S."/>
            <person name="Mungall K.L."/>
            <person name="Murphy L.D."/>
            <person name="Niblett D."/>
            <person name="Odell C."/>
            <person name="Oliver K."/>
            <person name="O'Neil S."/>
            <person name="Pearson D."/>
            <person name="Quail M.A."/>
            <person name="Rabbinowitsch E."/>
            <person name="Rutherford K.M."/>
            <person name="Rutter S."/>
            <person name="Saunders D."/>
            <person name="Seeger K."/>
            <person name="Sharp S."/>
            <person name="Skelton J."/>
            <person name="Simmonds M.N."/>
            <person name="Squares R."/>
            <person name="Squares S."/>
            <person name="Stevens K."/>
            <person name="Taylor K."/>
            <person name="Taylor R.G."/>
            <person name="Tivey A."/>
            <person name="Walsh S.V."/>
            <person name="Warren T."/>
            <person name="Whitehead S."/>
            <person name="Woodward J.R."/>
            <person name="Volckaert G."/>
            <person name="Aert R."/>
            <person name="Robben J."/>
            <person name="Grymonprez B."/>
            <person name="Weltjens I."/>
            <person name="Vanstreels E."/>
            <person name="Rieger M."/>
            <person name="Schaefer M."/>
            <person name="Mueller-Auer S."/>
            <person name="Gabel C."/>
            <person name="Fuchs M."/>
            <person name="Duesterhoeft A."/>
            <person name="Fritzc C."/>
            <person name="Holzer E."/>
            <person name="Moestl D."/>
            <person name="Hilbert H."/>
            <person name="Borzym K."/>
            <person name="Langer I."/>
            <person name="Beck A."/>
            <person name="Lehrach H."/>
            <person name="Reinhardt R."/>
            <person name="Pohl T.M."/>
            <person name="Eger P."/>
            <person name="Zimmermann W."/>
            <person name="Wedler H."/>
            <person name="Wambutt R."/>
            <person name="Purnelle B."/>
            <person name="Goffeau A."/>
            <person name="Cadieu E."/>
            <person name="Dreano S."/>
            <person name="Gloux S."/>
            <person name="Lelaure V."/>
            <person name="Mottier S."/>
            <person name="Galibert F."/>
            <person name="Aves S.J."/>
            <person name="Xiang Z."/>
            <person name="Hunt C."/>
            <person name="Moore K."/>
            <person name="Hurst S.M."/>
            <person name="Lucas M."/>
            <person name="Rochet M."/>
            <person name="Gaillardin C."/>
            <person name="Tallada V.A."/>
            <person name="Garzon A."/>
            <person name="Thode G."/>
            <person name="Daga R.R."/>
            <person name="Cruzado L."/>
            <person name="Jimenez J."/>
            <person name="Sanchez M."/>
            <person name="del Rey F."/>
            <person name="Benito J."/>
            <person name="Dominguez A."/>
            <person name="Revuelta J.L."/>
            <person name="Moreno S."/>
            <person name="Armstrong J."/>
            <person name="Forsburg S.L."/>
            <person name="Cerutti L."/>
            <person name="Lowe T."/>
            <person name="McCombie W.R."/>
            <person name="Paulsen I."/>
            <person name="Potashkin J."/>
            <person name="Shpakovski G.V."/>
            <person name="Ussery D."/>
            <person name="Barrell B.G."/>
            <person name="Nurse P."/>
        </authorList>
    </citation>
    <scope>NUCLEOTIDE SEQUENCE [LARGE SCALE GENOMIC DNA]</scope>
    <source>
        <strain>972 / ATCC 24843</strain>
    </source>
</reference>
<reference key="2">
    <citation type="journal article" date="2006" name="Nat. Biotechnol.">
        <title>ORFeome cloning and global analysis of protein localization in the fission yeast Schizosaccharomyces pombe.</title>
        <authorList>
            <person name="Matsuyama A."/>
            <person name="Arai R."/>
            <person name="Yashiroda Y."/>
            <person name="Shirai A."/>
            <person name="Kamata A."/>
            <person name="Sekido S."/>
            <person name="Kobayashi Y."/>
            <person name="Hashimoto A."/>
            <person name="Hamamoto M."/>
            <person name="Hiraoka Y."/>
            <person name="Horinouchi S."/>
            <person name="Yoshida M."/>
        </authorList>
    </citation>
    <scope>SUBCELLULAR LOCATION [LARGE SCALE ANALYSIS]</scope>
</reference>
<comment type="function">
    <text evidence="1">Converts guanine to guanosine monophosphate, and hypoxanthine to inosine monophosphate. Transfers the 5-phosphoribosyl group from 5-phosphoribosylpyrophosphate onto the purine. Plays a central role in the generation of purine nucleotides through the purine salvage pathway (By similarity).</text>
</comment>
<comment type="catalytic activity">
    <reaction evidence="2">
        <text>IMP + diphosphate = hypoxanthine + 5-phospho-alpha-D-ribose 1-diphosphate</text>
        <dbReference type="Rhea" id="RHEA:17973"/>
        <dbReference type="ChEBI" id="CHEBI:17368"/>
        <dbReference type="ChEBI" id="CHEBI:33019"/>
        <dbReference type="ChEBI" id="CHEBI:58017"/>
        <dbReference type="ChEBI" id="CHEBI:58053"/>
        <dbReference type="EC" id="2.4.2.8"/>
    </reaction>
    <physiologicalReaction direction="right-to-left" evidence="2">
        <dbReference type="Rhea" id="RHEA:17975"/>
    </physiologicalReaction>
</comment>
<comment type="catalytic activity">
    <reaction evidence="2">
        <text>GMP + diphosphate = guanine + 5-phospho-alpha-D-ribose 1-diphosphate</text>
        <dbReference type="Rhea" id="RHEA:25424"/>
        <dbReference type="ChEBI" id="CHEBI:16235"/>
        <dbReference type="ChEBI" id="CHEBI:33019"/>
        <dbReference type="ChEBI" id="CHEBI:58017"/>
        <dbReference type="ChEBI" id="CHEBI:58115"/>
        <dbReference type="EC" id="2.4.2.8"/>
    </reaction>
    <physiologicalReaction direction="right-to-left" evidence="2">
        <dbReference type="Rhea" id="RHEA:25426"/>
    </physiologicalReaction>
</comment>
<comment type="cofactor">
    <cofactor evidence="1">
        <name>Mg(2+)</name>
        <dbReference type="ChEBI" id="CHEBI:18420"/>
    </cofactor>
    <text evidence="1">The magnesium ions are essentially bound to the substrate and have few direct interactions with the protein.</text>
</comment>
<comment type="subunit">
    <text evidence="1">Dimer.</text>
</comment>
<comment type="subcellular location">
    <subcellularLocation>
        <location evidence="3">Endoplasmic reticulum</location>
    </subcellularLocation>
</comment>
<comment type="similarity">
    <text evidence="4">Belongs to the purine/pyrimidine phosphoribosyltransferase family.</text>
</comment>
<protein>
    <recommendedName>
        <fullName>Hypoxanthine-guanine phosphoribosyltransferase</fullName>
        <shortName>HGPRT</shortName>
        <shortName>HGPRTase</shortName>
        <ecNumber evidence="2">2.4.2.8</ecNumber>
    </recommendedName>
</protein>
<evidence type="ECO:0000250" key="1"/>
<evidence type="ECO:0000250" key="2">
    <source>
        <dbReference type="UniProtKB" id="Q04178"/>
    </source>
</evidence>
<evidence type="ECO:0000269" key="3">
    <source>
    </source>
</evidence>
<evidence type="ECO:0000305" key="4"/>
<gene>
    <name type="primary">hpt1</name>
    <name type="ORF">SPAC23C11.13c</name>
</gene>
<name>HPRT_SCHPO</name>
<keyword id="KW-0256">Endoplasmic reticulum</keyword>
<keyword id="KW-0328">Glycosyltransferase</keyword>
<keyword id="KW-0460">Magnesium</keyword>
<keyword id="KW-0479">Metal-binding</keyword>
<keyword id="KW-0547">Nucleotide-binding</keyword>
<keyword id="KW-0660">Purine salvage</keyword>
<keyword id="KW-1185">Reference proteome</keyword>
<keyword id="KW-0808">Transferase</keyword>
<sequence length="206" mass="23572">MDPVRLYYSYNDIHKMCAQQAEKILETFRPDVIIAIGGGGFIPARILRTFLKKKGSKNIPIQAIGLSLYEELVSDSPEEVPGLEVKRTQWLDFSTLGMVDLVGKNILIVDEVDDTRTTLHYALRELQRDVAEQAKKLNREGEKTTFGIFVVHNKVKPKNAQLDKEILDKYYFTGCNTPDCWIMYPWEAQDIEEHDSHVAKMGDLKP</sequence>
<proteinExistence type="inferred from homology"/>
<accession>O13917</accession>